<gene>
    <name type="primary">eif2a</name>
    <name type="synonym">aif2A</name>
    <name type="ordered locus">PYRAB08460</name>
    <name type="ORF">PAB0568</name>
</gene>
<dbReference type="EMBL" id="AJ248285">
    <property type="protein sequence ID" value="CAB49760.1"/>
    <property type="molecule type" value="Genomic_DNA"/>
</dbReference>
<dbReference type="EMBL" id="HE613800">
    <property type="protein sequence ID" value="CCE70251.1"/>
    <property type="molecule type" value="Genomic_DNA"/>
</dbReference>
<dbReference type="PIR" id="G75130">
    <property type="entry name" value="G75130"/>
</dbReference>
<dbReference type="RefSeq" id="WP_010867969.1">
    <property type="nucleotide sequence ID" value="NC_000868.1"/>
</dbReference>
<dbReference type="PDB" id="1YZ6">
    <property type="method" value="X-ray"/>
    <property type="resolution" value="3.37 A"/>
    <property type="chains" value="A=2-275"/>
</dbReference>
<dbReference type="PDB" id="1YZ7">
    <property type="method" value="X-ray"/>
    <property type="resolution" value="2.26 A"/>
    <property type="chains" value="A=89-275"/>
</dbReference>
<dbReference type="PDBsum" id="1YZ6"/>
<dbReference type="PDBsum" id="1YZ7"/>
<dbReference type="SMR" id="Q9V0E4"/>
<dbReference type="STRING" id="272844.PAB0568"/>
<dbReference type="KEGG" id="pab:PAB0568"/>
<dbReference type="PATRIC" id="fig|272844.11.peg.895"/>
<dbReference type="eggNOG" id="arCOG04107">
    <property type="taxonomic scope" value="Archaea"/>
</dbReference>
<dbReference type="HOGENOM" id="CLU_033458_0_2_2"/>
<dbReference type="OrthoDB" id="84794at2157"/>
<dbReference type="PhylomeDB" id="Q9V0E4"/>
<dbReference type="EvolutionaryTrace" id="Q9V0E4"/>
<dbReference type="Proteomes" id="UP000000810">
    <property type="component" value="Chromosome"/>
</dbReference>
<dbReference type="Proteomes" id="UP000009139">
    <property type="component" value="Chromosome"/>
</dbReference>
<dbReference type="GO" id="GO:0043022">
    <property type="term" value="F:ribosome binding"/>
    <property type="evidence" value="ECO:0007669"/>
    <property type="project" value="TreeGrafter"/>
</dbReference>
<dbReference type="GO" id="GO:0003723">
    <property type="term" value="F:RNA binding"/>
    <property type="evidence" value="ECO:0007669"/>
    <property type="project" value="UniProtKB-UniRule"/>
</dbReference>
<dbReference type="GO" id="GO:0003743">
    <property type="term" value="F:translation initiation factor activity"/>
    <property type="evidence" value="ECO:0007669"/>
    <property type="project" value="UniProtKB-UniRule"/>
</dbReference>
<dbReference type="CDD" id="cd04452">
    <property type="entry name" value="S1_IF2_alpha"/>
    <property type="match status" value="1"/>
</dbReference>
<dbReference type="FunFam" id="2.40.50.140:FF:000015">
    <property type="entry name" value="Eukaryotic translation initiation factor 2 subunit alpha"/>
    <property type="match status" value="1"/>
</dbReference>
<dbReference type="FunFam" id="1.10.150.190:FF:000006">
    <property type="entry name" value="Translation initiation factor 2 subunit alpha"/>
    <property type="match status" value="1"/>
</dbReference>
<dbReference type="FunFam" id="3.30.70.1130:FF:000002">
    <property type="entry name" value="Translation initiation factor 2 subunit alpha"/>
    <property type="match status" value="1"/>
</dbReference>
<dbReference type="Gene3D" id="3.30.70.1130">
    <property type="entry name" value="EIF_2_alpha"/>
    <property type="match status" value="1"/>
</dbReference>
<dbReference type="Gene3D" id="2.40.50.140">
    <property type="entry name" value="Nucleic acid-binding proteins"/>
    <property type="match status" value="1"/>
</dbReference>
<dbReference type="Gene3D" id="1.10.150.190">
    <property type="entry name" value="Translation initiation factor 2, subunit 1, domain 2"/>
    <property type="match status" value="1"/>
</dbReference>
<dbReference type="HAMAP" id="MF_00231">
    <property type="entry name" value="eIF_2_alpha"/>
    <property type="match status" value="1"/>
</dbReference>
<dbReference type="InterPro" id="IPR012340">
    <property type="entry name" value="NA-bd_OB-fold"/>
</dbReference>
<dbReference type="InterPro" id="IPR003029">
    <property type="entry name" value="S1_domain"/>
</dbReference>
<dbReference type="InterPro" id="IPR044126">
    <property type="entry name" value="S1_IF2_alpha"/>
</dbReference>
<dbReference type="InterPro" id="IPR022964">
    <property type="entry name" value="TIF2_asu_arc"/>
</dbReference>
<dbReference type="InterPro" id="IPR024055">
    <property type="entry name" value="TIF2_asu_C"/>
</dbReference>
<dbReference type="InterPro" id="IPR024054">
    <property type="entry name" value="TIF2_asu_middle_sf"/>
</dbReference>
<dbReference type="InterPro" id="IPR011488">
    <property type="entry name" value="TIF_2_asu"/>
</dbReference>
<dbReference type="NCBIfam" id="NF003062">
    <property type="entry name" value="PRK03987.1-1"/>
    <property type="match status" value="1"/>
</dbReference>
<dbReference type="NCBIfam" id="NF003064">
    <property type="entry name" value="PRK03987.1-4"/>
    <property type="match status" value="1"/>
</dbReference>
<dbReference type="NCBIfam" id="NF003066">
    <property type="entry name" value="PRK03987.1-6"/>
    <property type="match status" value="1"/>
</dbReference>
<dbReference type="PANTHER" id="PTHR10602">
    <property type="entry name" value="EUKARYOTIC TRANSLATION INITIATION FACTOR 2 SUBUNIT 1"/>
    <property type="match status" value="1"/>
</dbReference>
<dbReference type="PANTHER" id="PTHR10602:SF0">
    <property type="entry name" value="EUKARYOTIC TRANSLATION INITIATION FACTOR 2 SUBUNIT 1"/>
    <property type="match status" value="1"/>
</dbReference>
<dbReference type="Pfam" id="PF07541">
    <property type="entry name" value="EIF_2_alpha"/>
    <property type="match status" value="1"/>
</dbReference>
<dbReference type="Pfam" id="PF00575">
    <property type="entry name" value="S1"/>
    <property type="match status" value="1"/>
</dbReference>
<dbReference type="SMART" id="SM00316">
    <property type="entry name" value="S1"/>
    <property type="match status" value="1"/>
</dbReference>
<dbReference type="SUPFAM" id="SSF110993">
    <property type="entry name" value="eIF-2-alpha, C-terminal domain"/>
    <property type="match status" value="1"/>
</dbReference>
<dbReference type="SUPFAM" id="SSF116742">
    <property type="entry name" value="eIF2alpha middle domain-like"/>
    <property type="match status" value="1"/>
</dbReference>
<dbReference type="SUPFAM" id="SSF50249">
    <property type="entry name" value="Nucleic acid-binding proteins"/>
    <property type="match status" value="1"/>
</dbReference>
<dbReference type="PROSITE" id="PS50126">
    <property type="entry name" value="S1"/>
    <property type="match status" value="1"/>
</dbReference>
<name>IF2A_PYRAB</name>
<feature type="chain" id="PRO_0000137397" description="Translation initiation factor 2 subunit alpha">
    <location>
        <begin position="1"/>
        <end position="275"/>
    </location>
</feature>
<feature type="domain" description="S1 motif">
    <location>
        <begin position="12"/>
        <end position="83"/>
    </location>
</feature>
<feature type="strand" evidence="3">
    <location>
        <begin position="14"/>
        <end position="23"/>
    </location>
</feature>
<feature type="strand" evidence="3">
    <location>
        <begin position="26"/>
        <end position="31"/>
    </location>
</feature>
<feature type="strand" evidence="3">
    <location>
        <begin position="38"/>
        <end position="42"/>
    </location>
</feature>
<feature type="helix" evidence="3">
    <location>
        <begin position="43"/>
        <end position="45"/>
    </location>
</feature>
<feature type="strand" evidence="3">
    <location>
        <begin position="47"/>
        <end position="49"/>
    </location>
</feature>
<feature type="helix" evidence="3">
    <location>
        <begin position="54"/>
        <end position="56"/>
    </location>
</feature>
<feature type="strand" evidence="3">
    <location>
        <begin position="63"/>
        <end position="72"/>
    </location>
</feature>
<feature type="turn" evidence="3">
    <location>
        <begin position="73"/>
        <end position="76"/>
    </location>
</feature>
<feature type="strand" evidence="3">
    <location>
        <begin position="77"/>
        <end position="84"/>
    </location>
</feature>
<feature type="helix" evidence="4">
    <location>
        <begin position="92"/>
        <end position="113"/>
    </location>
</feature>
<feature type="helix" evidence="4">
    <location>
        <begin position="118"/>
        <end position="124"/>
    </location>
</feature>
<feature type="helix" evidence="4">
    <location>
        <begin position="126"/>
        <end position="133"/>
    </location>
</feature>
<feature type="helix" evidence="4">
    <location>
        <begin position="136"/>
        <end position="146"/>
    </location>
</feature>
<feature type="helix" evidence="4">
    <location>
        <begin position="148"/>
        <end position="150"/>
    </location>
</feature>
<feature type="helix" evidence="4">
    <location>
        <begin position="159"/>
        <end position="170"/>
    </location>
</feature>
<feature type="strand" evidence="4">
    <location>
        <begin position="176"/>
        <end position="185"/>
    </location>
</feature>
<feature type="helix" evidence="4">
    <location>
        <begin position="191"/>
        <end position="207"/>
    </location>
</feature>
<feature type="strand" evidence="3">
    <location>
        <begin position="209"/>
        <end position="211"/>
    </location>
</feature>
<feature type="strand" evidence="4">
    <location>
        <begin position="213"/>
        <end position="218"/>
    </location>
</feature>
<feature type="strand" evidence="4">
    <location>
        <begin position="223"/>
        <end position="232"/>
    </location>
</feature>
<feature type="helix" evidence="4">
    <location>
        <begin position="233"/>
        <end position="253"/>
    </location>
</feature>
<feature type="strand" evidence="4">
    <location>
        <begin position="257"/>
        <end position="261"/>
    </location>
</feature>
<comment type="function">
    <text evidence="1">eIF-2 functions in the early steps of protein synthesis by forming a ternary complex with GTP and initiator tRNA.</text>
</comment>
<comment type="subunit">
    <text evidence="1">Heterotrimer composed of an alpha, a beta and a gamma chain.</text>
</comment>
<comment type="similarity">
    <text evidence="2">Belongs to the eIF-2-alpha family.</text>
</comment>
<protein>
    <recommendedName>
        <fullName>Translation initiation factor 2 subunit alpha</fullName>
    </recommendedName>
    <alternativeName>
        <fullName>aIF2-alpha</fullName>
    </alternativeName>
    <alternativeName>
        <fullName>eIF-2-alpha</fullName>
    </alternativeName>
</protein>
<keyword id="KW-0002">3D-structure</keyword>
<keyword id="KW-0396">Initiation factor</keyword>
<keyword id="KW-0648">Protein biosynthesis</keyword>
<keyword id="KW-0694">RNA-binding</keyword>
<reference key="1">
    <citation type="journal article" date="2003" name="Mol. Microbiol.">
        <title>An integrated analysis of the genome of the hyperthermophilic archaeon Pyrococcus abyssi.</title>
        <authorList>
            <person name="Cohen G.N."/>
            <person name="Barbe V."/>
            <person name="Flament D."/>
            <person name="Galperin M."/>
            <person name="Heilig R."/>
            <person name="Lecompte O."/>
            <person name="Poch O."/>
            <person name="Prieur D."/>
            <person name="Querellou J."/>
            <person name="Ripp R."/>
            <person name="Thierry J.-C."/>
            <person name="Van der Oost J."/>
            <person name="Weissenbach J."/>
            <person name="Zivanovic Y."/>
            <person name="Forterre P."/>
        </authorList>
    </citation>
    <scope>NUCLEOTIDE SEQUENCE [LARGE SCALE GENOMIC DNA]</scope>
    <source>
        <strain>GE5 / Orsay</strain>
    </source>
</reference>
<reference key="2">
    <citation type="journal article" date="2012" name="Curr. Microbiol.">
        <title>Re-annotation of two hyperthermophilic archaea Pyrococcus abyssi GE5 and Pyrococcus furiosus DSM 3638.</title>
        <authorList>
            <person name="Gao J."/>
            <person name="Wang J."/>
        </authorList>
    </citation>
    <scope>GENOME REANNOTATION</scope>
    <source>
        <strain>GE5 / Orsay</strain>
    </source>
</reference>
<evidence type="ECO:0000250" key="1"/>
<evidence type="ECO:0000305" key="2"/>
<evidence type="ECO:0007829" key="3">
    <source>
        <dbReference type="PDB" id="1YZ6"/>
    </source>
</evidence>
<evidence type="ECO:0007829" key="4">
    <source>
        <dbReference type="PDB" id="1YZ7"/>
    </source>
</evidence>
<organism>
    <name type="scientific">Pyrococcus abyssi (strain GE5 / Orsay)</name>
    <dbReference type="NCBI Taxonomy" id="272844"/>
    <lineage>
        <taxon>Archaea</taxon>
        <taxon>Methanobacteriati</taxon>
        <taxon>Methanobacteriota</taxon>
        <taxon>Thermococci</taxon>
        <taxon>Thermococcales</taxon>
        <taxon>Thermococcaceae</taxon>
        <taxon>Pyrococcus</taxon>
    </lineage>
</organism>
<accession>Q9V0E4</accession>
<accession>G8ZH56</accession>
<sequence length="275" mass="31912">MPRRAREYPEEGEFVVATVKRIHNYGAFLELDEYPGKEAFMHISEVASTWVRNIRDYLKEGQKVVAKVIRVDPRKGHIDLSLRRVTQQQRKAKLQEFKRAQKAENLLKLAAEKLGKDFETAWREVWVPLEEEWGEVYAAFEDAAKDGIDVLKGHVPDEWLPVLKEIIDNYVEVPTVTIDAEFEITVPKPNGVEIIKEALIRARDRANKEKDVEVKFTYLGAPRYRIDITAPDYYKAEEVLESIAEEILRVIKEAGGEATLLRKEKRIKKVKKRKK</sequence>
<proteinExistence type="evidence at protein level"/>